<accession>Q9USV0</accession>
<accession>P78930</accession>
<accession>P78931</accession>
<reference key="1">
    <citation type="submission" date="1996-03" db="EMBL/GenBank/DDBJ databases">
        <title>S.pombe chromosome II cosmid 1228 sequence.</title>
        <authorList>
            <person name="Kohnosu A."/>
            <person name="Niwa O."/>
            <person name="Yano M."/>
            <person name="Saitoh S."/>
            <person name="Katayama T."/>
            <person name="Nagao K."/>
            <person name="Yanagida M."/>
        </authorList>
    </citation>
    <scope>NUCLEOTIDE SEQUENCE [GENOMIC DNA]</scope>
    <source>
        <strain>972 / ATCC 24843</strain>
    </source>
</reference>
<reference key="2">
    <citation type="journal article" date="2002" name="Nature">
        <title>The genome sequence of Schizosaccharomyces pombe.</title>
        <authorList>
            <person name="Wood V."/>
            <person name="Gwilliam R."/>
            <person name="Rajandream M.A."/>
            <person name="Lyne M.H."/>
            <person name="Lyne R."/>
            <person name="Stewart A."/>
            <person name="Sgouros J.G."/>
            <person name="Peat N."/>
            <person name="Hayles J."/>
            <person name="Baker S.G."/>
            <person name="Basham D."/>
            <person name="Bowman S."/>
            <person name="Brooks K."/>
            <person name="Brown D."/>
            <person name="Brown S."/>
            <person name="Chillingworth T."/>
            <person name="Churcher C.M."/>
            <person name="Collins M."/>
            <person name="Connor R."/>
            <person name="Cronin A."/>
            <person name="Davis P."/>
            <person name="Feltwell T."/>
            <person name="Fraser A."/>
            <person name="Gentles S."/>
            <person name="Goble A."/>
            <person name="Hamlin N."/>
            <person name="Harris D.E."/>
            <person name="Hidalgo J."/>
            <person name="Hodgson G."/>
            <person name="Holroyd S."/>
            <person name="Hornsby T."/>
            <person name="Howarth S."/>
            <person name="Huckle E.J."/>
            <person name="Hunt S."/>
            <person name="Jagels K."/>
            <person name="James K.D."/>
            <person name="Jones L."/>
            <person name="Jones M."/>
            <person name="Leather S."/>
            <person name="McDonald S."/>
            <person name="McLean J."/>
            <person name="Mooney P."/>
            <person name="Moule S."/>
            <person name="Mungall K.L."/>
            <person name="Murphy L.D."/>
            <person name="Niblett D."/>
            <person name="Odell C."/>
            <person name="Oliver K."/>
            <person name="O'Neil S."/>
            <person name="Pearson D."/>
            <person name="Quail M.A."/>
            <person name="Rabbinowitsch E."/>
            <person name="Rutherford K.M."/>
            <person name="Rutter S."/>
            <person name="Saunders D."/>
            <person name="Seeger K."/>
            <person name="Sharp S."/>
            <person name="Skelton J."/>
            <person name="Simmonds M.N."/>
            <person name="Squares R."/>
            <person name="Squares S."/>
            <person name="Stevens K."/>
            <person name="Taylor K."/>
            <person name="Taylor R.G."/>
            <person name="Tivey A."/>
            <person name="Walsh S.V."/>
            <person name="Warren T."/>
            <person name="Whitehead S."/>
            <person name="Woodward J.R."/>
            <person name="Volckaert G."/>
            <person name="Aert R."/>
            <person name="Robben J."/>
            <person name="Grymonprez B."/>
            <person name="Weltjens I."/>
            <person name="Vanstreels E."/>
            <person name="Rieger M."/>
            <person name="Schaefer M."/>
            <person name="Mueller-Auer S."/>
            <person name="Gabel C."/>
            <person name="Fuchs M."/>
            <person name="Duesterhoeft A."/>
            <person name="Fritzc C."/>
            <person name="Holzer E."/>
            <person name="Moestl D."/>
            <person name="Hilbert H."/>
            <person name="Borzym K."/>
            <person name="Langer I."/>
            <person name="Beck A."/>
            <person name="Lehrach H."/>
            <person name="Reinhardt R."/>
            <person name="Pohl T.M."/>
            <person name="Eger P."/>
            <person name="Zimmermann W."/>
            <person name="Wedler H."/>
            <person name="Wambutt R."/>
            <person name="Purnelle B."/>
            <person name="Goffeau A."/>
            <person name="Cadieu E."/>
            <person name="Dreano S."/>
            <person name="Gloux S."/>
            <person name="Lelaure V."/>
            <person name="Mottier S."/>
            <person name="Galibert F."/>
            <person name="Aves S.J."/>
            <person name="Xiang Z."/>
            <person name="Hunt C."/>
            <person name="Moore K."/>
            <person name="Hurst S.M."/>
            <person name="Lucas M."/>
            <person name="Rochet M."/>
            <person name="Gaillardin C."/>
            <person name="Tallada V.A."/>
            <person name="Garzon A."/>
            <person name="Thode G."/>
            <person name="Daga R.R."/>
            <person name="Cruzado L."/>
            <person name="Jimenez J."/>
            <person name="Sanchez M."/>
            <person name="del Rey F."/>
            <person name="Benito J."/>
            <person name="Dominguez A."/>
            <person name="Revuelta J.L."/>
            <person name="Moreno S."/>
            <person name="Armstrong J."/>
            <person name="Forsburg S.L."/>
            <person name="Cerutti L."/>
            <person name="Lowe T."/>
            <person name="McCombie W.R."/>
            <person name="Paulsen I."/>
            <person name="Potashkin J."/>
            <person name="Shpakovski G.V."/>
            <person name="Ussery D."/>
            <person name="Barrell B.G."/>
            <person name="Nurse P."/>
        </authorList>
    </citation>
    <scope>NUCLEOTIDE SEQUENCE [LARGE SCALE GENOMIC DNA]</scope>
    <source>
        <strain>972 / ATCC 24843</strain>
    </source>
</reference>
<protein>
    <recommendedName>
        <fullName>Putative ERAD-associated E3 ubiquitin-protein ligase component</fullName>
    </recommendedName>
</protein>
<keyword id="KW-0256">Endoplasmic reticulum</keyword>
<keyword id="KW-0325">Glycoprotein</keyword>
<keyword id="KW-0472">Membrane</keyword>
<keyword id="KW-1185">Reference proteome</keyword>
<keyword id="KW-0677">Repeat</keyword>
<keyword id="KW-0732">Signal</keyword>
<keyword id="KW-0812">Transmembrane</keyword>
<keyword id="KW-1133">Transmembrane helix</keyword>
<comment type="function">
    <text evidence="1">Component of the endoplasmic reticulum quality control (ERQC) system involved in ubiquitin-dependent degradation of missfolded endoplasmic reticulum proteins.</text>
</comment>
<comment type="subcellular location">
    <subcellularLocation>
        <location evidence="1">Endoplasmic reticulum membrane</location>
        <topology evidence="1">Single-pass membrane protein</topology>
    </subcellularLocation>
</comment>
<comment type="similarity">
    <text evidence="4">Belongs to the sel-1 family.</text>
</comment>
<comment type="sequence caution" evidence="4">
    <conflict type="frameshift">
        <sequence resource="EMBL-CDS" id="BAA12178"/>
    </conflict>
</comment>
<comment type="sequence caution" evidence="4">
    <conflict type="frameshift">
        <sequence resource="EMBL-CDS" id="BAA12179"/>
    </conflict>
</comment>
<gene>
    <name type="ORF">SPBC28F2.08c</name>
</gene>
<proteinExistence type="inferred from homology"/>
<sequence>MQLLNFLICLFFIFKRCVFTVIGGEFSYDNIDKKPILVASYPEGSRFNVSASIKTLPDLVTLTFPKLVKDPGYVYEEAEKGDPESQFLIAMLYAMGPDERLGLSFPRNEPLSRIFLELSATQNYTYALLALAYKHLNGLSTPMSVDKGVELYKQVAHQISCLVQPLSHFAPDIAAEYPVDLYDLSRTSSYSVQKKDDIVEYLKDYALRGNNISAHISLATIYQYGTPGKLKDIKLAVKHYLAAIRLVNSGIPDSPSEAIKSIHNNPRHAPTTKETANSLSIAAFRLGCMALHGELGKPDPSLAYAWFEYGVSLNHSSSKAAIAYMYFMGYPVAENTESITKLLENALASNDPLAFAVAGKVSLANGQIDEATVHLIRAVSNGHLESVLHIADIYYGSNNQLSIAYYENFISRVLELFDVKTISFDPLTRHFAHRLSAELGNLMSQILAAKDRDPSTSYLKTVIFPTNEQTHRNARIAMNYYSRAAARNHIHSLIKIGDFYRMGLGTSAKPELAFSYYSQAAAIHPSALAYWRLGWMHEYGVGVPVDFEMAKKNYDNALMHDTRAFLAVTLARLRMRLSSPDSWFSNIYRILGKVTYKFLKLVQYFIINIFDILSPAGPDSQLPPEPPTLQVDRTPQQPDPQETSESLPSPNTEEMGESYNDIRFTYDYIDGRFLETACVTLIVVVVGLVLMRRHQQHRLQERRERIIRRQNRA</sequence>
<feature type="signal peptide" evidence="2">
    <location>
        <begin position="1"/>
        <end position="20"/>
    </location>
</feature>
<feature type="chain" id="PRO_0000350745" description="Putative ERAD-associated E3 ubiquitin-protein ligase component">
    <location>
        <begin position="21"/>
        <end position="713"/>
    </location>
</feature>
<feature type="transmembrane region" description="Helical" evidence="2">
    <location>
        <begin position="671"/>
        <end position="691"/>
    </location>
</feature>
<feature type="repeat" description="Sel1-like 1">
    <location>
        <begin position="83"/>
        <end position="124"/>
    </location>
</feature>
<feature type="repeat" description="Sel1-like 2">
    <location>
        <begin position="125"/>
        <end position="160"/>
    </location>
</feature>
<feature type="repeat" description="Sel1-like 3">
    <location>
        <begin position="212"/>
        <end position="248"/>
    </location>
</feature>
<feature type="repeat" description="Sel1-like 4">
    <location>
        <begin position="280"/>
        <end position="315"/>
    </location>
</feature>
<feature type="repeat" description="Sel1-like 5">
    <location>
        <begin position="490"/>
        <end position="525"/>
    </location>
</feature>
<feature type="repeat" description="Sel1-like 6">
    <location>
        <begin position="527"/>
        <end position="562"/>
    </location>
</feature>
<feature type="region of interest" description="Disordered" evidence="3">
    <location>
        <begin position="621"/>
        <end position="655"/>
    </location>
</feature>
<feature type="compositionally biased region" description="Polar residues" evidence="3">
    <location>
        <begin position="631"/>
        <end position="652"/>
    </location>
</feature>
<feature type="glycosylation site" description="N-linked (GlcNAc...) asparagine" evidence="2">
    <location>
        <position position="48"/>
    </location>
</feature>
<feature type="glycosylation site" description="N-linked (GlcNAc...) asparagine" evidence="2">
    <location>
        <position position="123"/>
    </location>
</feature>
<feature type="glycosylation site" description="N-linked (GlcNAc...) asparagine" evidence="2">
    <location>
        <position position="211"/>
    </location>
</feature>
<feature type="glycosylation site" description="N-linked (GlcNAc...) asparagine" evidence="2">
    <location>
        <position position="314"/>
    </location>
</feature>
<feature type="sequence conflict" description="In Ref. 1; BAA12178." evidence="4" ref="1">
    <original>V</original>
    <variation>G</variation>
    <location>
        <position position="149"/>
    </location>
</feature>
<feature type="sequence conflict" description="In Ref. 1; BAA12178." evidence="4" ref="1">
    <original>S</original>
    <variation>P</variation>
    <location>
        <position position="317"/>
    </location>
</feature>
<feature type="sequence conflict" description="In Ref. 1; BAA12178." evidence="4" ref="1">
    <original>I</original>
    <variation>L</variation>
    <location>
        <position position="339"/>
    </location>
</feature>
<evidence type="ECO:0000250" key="1"/>
<evidence type="ECO:0000255" key="2"/>
<evidence type="ECO:0000256" key="3">
    <source>
        <dbReference type="SAM" id="MobiDB-lite"/>
    </source>
</evidence>
<evidence type="ECO:0000305" key="4"/>
<name>HRD3_SCHPO</name>
<dbReference type="EMBL" id="D83992">
    <property type="protein sequence ID" value="BAA12178.1"/>
    <property type="status" value="ALT_FRAME"/>
    <property type="molecule type" value="Genomic_DNA"/>
</dbReference>
<dbReference type="EMBL" id="D83992">
    <property type="protein sequence ID" value="BAA12179.1"/>
    <property type="status" value="ALT_FRAME"/>
    <property type="molecule type" value="Genomic_DNA"/>
</dbReference>
<dbReference type="EMBL" id="CU329671">
    <property type="protein sequence ID" value="CAB57937.1"/>
    <property type="molecule type" value="Genomic_DNA"/>
</dbReference>
<dbReference type="PIR" id="T40051">
    <property type="entry name" value="T40051"/>
</dbReference>
<dbReference type="SMR" id="Q9USV0"/>
<dbReference type="BioGRID" id="277095">
    <property type="interactions" value="12"/>
</dbReference>
<dbReference type="FunCoup" id="Q9USV0">
    <property type="interactions" value="74"/>
</dbReference>
<dbReference type="STRING" id="284812.Q9USV0"/>
<dbReference type="iPTMnet" id="Q9USV0"/>
<dbReference type="PaxDb" id="4896-SPBC28F2.08c.1"/>
<dbReference type="EnsemblFungi" id="SPBC28F2.08c.1">
    <property type="protein sequence ID" value="SPBC28F2.08c.1:pep"/>
    <property type="gene ID" value="SPBC28F2.08c"/>
</dbReference>
<dbReference type="KEGG" id="spo:2540568"/>
<dbReference type="PomBase" id="SPBC28F2.08c"/>
<dbReference type="VEuPathDB" id="FungiDB:SPBC28F2.08c"/>
<dbReference type="eggNOG" id="KOG1550">
    <property type="taxonomic scope" value="Eukaryota"/>
</dbReference>
<dbReference type="HOGENOM" id="CLU_386442_0_0_1"/>
<dbReference type="InParanoid" id="Q9USV0"/>
<dbReference type="OMA" id="SLAYWRL"/>
<dbReference type="PhylomeDB" id="Q9USV0"/>
<dbReference type="Reactome" id="R-SPO-5358346">
    <property type="pathway name" value="Hedgehog ligand biogenesis"/>
</dbReference>
<dbReference type="PRO" id="PR:Q9USV0"/>
<dbReference type="Proteomes" id="UP000002485">
    <property type="component" value="Chromosome II"/>
</dbReference>
<dbReference type="GO" id="GO:0005783">
    <property type="term" value="C:endoplasmic reticulum"/>
    <property type="evidence" value="ECO:0007005"/>
    <property type="project" value="PomBase"/>
</dbReference>
<dbReference type="GO" id="GO:0000836">
    <property type="term" value="C:Hrd1p ubiquitin ligase complex"/>
    <property type="evidence" value="ECO:0000266"/>
    <property type="project" value="PomBase"/>
</dbReference>
<dbReference type="GO" id="GO:0036503">
    <property type="term" value="P:ERAD pathway"/>
    <property type="evidence" value="ECO:0000266"/>
    <property type="project" value="PomBase"/>
</dbReference>
<dbReference type="Gene3D" id="1.25.40.10">
    <property type="entry name" value="Tetratricopeptide repeat domain"/>
    <property type="match status" value="2"/>
</dbReference>
<dbReference type="InterPro" id="IPR006597">
    <property type="entry name" value="Sel1-like"/>
</dbReference>
<dbReference type="InterPro" id="IPR050767">
    <property type="entry name" value="Sel1_AlgK"/>
</dbReference>
<dbReference type="InterPro" id="IPR011990">
    <property type="entry name" value="TPR-like_helical_dom_sf"/>
</dbReference>
<dbReference type="PANTHER" id="PTHR11102:SF160">
    <property type="entry name" value="ERAD-ASSOCIATED E3 UBIQUITIN-PROTEIN LIGASE COMPONENT HRD3"/>
    <property type="match status" value="1"/>
</dbReference>
<dbReference type="PANTHER" id="PTHR11102">
    <property type="entry name" value="SEL-1-LIKE PROTEIN"/>
    <property type="match status" value="1"/>
</dbReference>
<dbReference type="Pfam" id="PF08238">
    <property type="entry name" value="Sel1"/>
    <property type="match status" value="7"/>
</dbReference>
<dbReference type="SMART" id="SM00671">
    <property type="entry name" value="SEL1"/>
    <property type="match status" value="6"/>
</dbReference>
<dbReference type="SUPFAM" id="SSF81901">
    <property type="entry name" value="HCP-like"/>
    <property type="match status" value="3"/>
</dbReference>
<organism>
    <name type="scientific">Schizosaccharomyces pombe (strain 972 / ATCC 24843)</name>
    <name type="common">Fission yeast</name>
    <dbReference type="NCBI Taxonomy" id="284812"/>
    <lineage>
        <taxon>Eukaryota</taxon>
        <taxon>Fungi</taxon>
        <taxon>Dikarya</taxon>
        <taxon>Ascomycota</taxon>
        <taxon>Taphrinomycotina</taxon>
        <taxon>Schizosaccharomycetes</taxon>
        <taxon>Schizosaccharomycetales</taxon>
        <taxon>Schizosaccharomycetaceae</taxon>
        <taxon>Schizosaccharomyces</taxon>
    </lineage>
</organism>